<name>DIXC1_MOUSE</name>
<accession>Q80Y83</accession>
<accession>Q3TPF4</accession>
<accession>Q3UQ90</accession>
<accession>Q5DPZ2</accession>
<accession>Q5DPZ3</accession>
<accession>Q5DPZ4</accession>
<accession>Q5DPZ6</accession>
<accession>Q6ZPJ2</accession>
<accession>Q8C467</accession>
<accession>Q8R1C1</accession>
<gene>
    <name type="primary">Dixdc1</name>
    <name type="synonym">Ccd1</name>
    <name type="synonym">Kiaa1735</name>
</gene>
<organism>
    <name type="scientific">Mus musculus</name>
    <name type="common">Mouse</name>
    <dbReference type="NCBI Taxonomy" id="10090"/>
    <lineage>
        <taxon>Eukaryota</taxon>
        <taxon>Metazoa</taxon>
        <taxon>Chordata</taxon>
        <taxon>Craniata</taxon>
        <taxon>Vertebrata</taxon>
        <taxon>Euteleostomi</taxon>
        <taxon>Mammalia</taxon>
        <taxon>Eutheria</taxon>
        <taxon>Euarchontoglires</taxon>
        <taxon>Glires</taxon>
        <taxon>Rodentia</taxon>
        <taxon>Myomorpha</taxon>
        <taxon>Muroidea</taxon>
        <taxon>Muridae</taxon>
        <taxon>Murinae</taxon>
        <taxon>Mus</taxon>
        <taxon>Mus</taxon>
    </lineage>
</organism>
<feature type="chain" id="PRO_0000287224" description="Dixin">
    <location>
        <begin position="1"/>
        <end position="711"/>
    </location>
</feature>
<feature type="domain" description="Calponin-homology (CH)" evidence="4">
    <location>
        <begin position="20"/>
        <end position="153"/>
    </location>
</feature>
<feature type="domain" description="DIX" evidence="5">
    <location>
        <begin position="600"/>
        <end position="680"/>
    </location>
</feature>
<feature type="region of interest" description="Actin-binding" evidence="2">
    <location>
        <begin position="153"/>
        <end position="326"/>
    </location>
</feature>
<feature type="region of interest" description="Disordered" evidence="6">
    <location>
        <begin position="233"/>
        <end position="258"/>
    </location>
</feature>
<feature type="region of interest" description="Disordered" evidence="6">
    <location>
        <begin position="271"/>
        <end position="298"/>
    </location>
</feature>
<feature type="region of interest" description="Disordered" evidence="6">
    <location>
        <begin position="584"/>
        <end position="623"/>
    </location>
</feature>
<feature type="coiled-coil region" evidence="3">
    <location>
        <begin position="279"/>
        <end position="452"/>
    </location>
</feature>
<feature type="compositionally biased region" description="Low complexity" evidence="6">
    <location>
        <begin position="237"/>
        <end position="254"/>
    </location>
</feature>
<feature type="compositionally biased region" description="Basic and acidic residues" evidence="6">
    <location>
        <begin position="278"/>
        <end position="295"/>
    </location>
</feature>
<feature type="compositionally biased region" description="Polar residues" evidence="6">
    <location>
        <begin position="597"/>
        <end position="623"/>
    </location>
</feature>
<feature type="modified residue" description="Phosphoserine" evidence="14">
    <location>
        <position position="212"/>
    </location>
</feature>
<feature type="modified residue" description="Phosphoserine" evidence="14">
    <location>
        <position position="257"/>
    </location>
</feature>
<feature type="modified residue" description="Phosphoserine" evidence="2">
    <location>
        <position position="618"/>
    </location>
</feature>
<feature type="splice variant" id="VSP_025383" description="In isoform 13 and isoform 14." evidence="11">
    <location>
        <begin position="1"/>
        <end position="320"/>
    </location>
</feature>
<feature type="splice variant" id="VSP_025384" description="In isoform 15." evidence="12">
    <location>
        <begin position="1"/>
        <end position="272"/>
    </location>
</feature>
<feature type="splice variant" id="VSP_025385" description="In isoform 11 and isoform 12." evidence="11">
    <location>
        <begin position="1"/>
        <end position="237"/>
    </location>
</feature>
<feature type="splice variant" id="VSP_025386" description="In isoform 9 and isoform 10." evidence="11">
    <location>
        <begin position="1"/>
        <end position="234"/>
    </location>
</feature>
<feature type="splice variant" id="VSP_025387" description="In isoform 3, isoform 4, isoform 7, isoform 8 and isoform 16." evidence="10 11">
    <original>MLACLTRGNLLDVLQEGFNE</original>
    <variation>MGTQVVMRVCNSSMPGAPS</variation>
    <location>
        <begin position="1"/>
        <end position="20"/>
    </location>
</feature>
<feature type="splice variant" id="VSP_025388" description="In isoform 5, isoform 6, isoform 7 and isoform 8." evidence="12">
    <location>
        <begin position="64"/>
        <end position="89"/>
    </location>
</feature>
<feature type="splice variant" id="VSP_025389" description="In isoform 16." evidence="10">
    <original>AGEKLTGVQLSPSNQQEMKSNVERVLQF</original>
    <variation>GCSFFRMHGNSVGKYLKVLALVNLRVGQ</variation>
    <location>
        <begin position="90"/>
        <end position="117"/>
    </location>
</feature>
<feature type="splice variant" id="VSP_025390" description="In isoform 16." evidence="10">
    <location>
        <begin position="118"/>
        <end position="711"/>
    </location>
</feature>
<feature type="splice variant" id="VSP_025391" description="In isoform 9 and isoform 10." evidence="11">
    <original>QKSPSESSCSS</original>
    <variation>MMIILQSKLIT</variation>
    <location>
        <begin position="235"/>
        <end position="245"/>
    </location>
</feature>
<feature type="splice variant" id="VSP_025392" description="In isoform 11 and isoform 12." evidence="11">
    <original>PSESSCSS</original>
    <variation>MGGTQVKC</variation>
    <location>
        <begin position="238"/>
        <end position="245"/>
    </location>
</feature>
<feature type="splice variant" id="VSP_025393" description="In isoform 15." evidence="12">
    <original>IPSEGIENRT</original>
    <variation>MNYGSTFHLA</variation>
    <location>
        <begin position="273"/>
        <end position="282"/>
    </location>
</feature>
<feature type="splice variant" id="VSP_025394" description="In isoform 2, isoform 4, isoform 6, isoform 8, isoform 10, isoform 12 and isoform 14." evidence="13">
    <location>
        <begin position="506"/>
        <end position="535"/>
    </location>
</feature>
<feature type="splice variant" id="VSP_025395" description="In isoform 15." evidence="12">
    <original>TL</original>
    <variation>KA</variation>
    <location>
        <begin position="614"/>
        <end position="615"/>
    </location>
</feature>
<feature type="splice variant" id="VSP_025396" description="In isoform 15." evidence="12">
    <location>
        <begin position="616"/>
        <end position="711"/>
    </location>
</feature>
<feature type="sequence conflict" description="In Ref. 4; BAC98242." evidence="13" ref="4">
    <original>I</original>
    <variation>T</variation>
    <location>
        <position position="278"/>
    </location>
</feature>
<feature type="sequence conflict" description="In Ref. 4; BAC98242." evidence="13" ref="4">
    <original>L</original>
    <variation>F</variation>
    <location>
        <position position="474"/>
    </location>
</feature>
<feature type="strand" evidence="15">
    <location>
        <begin position="628"/>
        <end position="635"/>
    </location>
</feature>
<feature type="strand" evidence="15">
    <location>
        <begin position="638"/>
        <end position="648"/>
    </location>
</feature>
<feature type="turn" evidence="15">
    <location>
        <begin position="650"/>
        <end position="652"/>
    </location>
</feature>
<feature type="helix" evidence="15">
    <location>
        <begin position="655"/>
        <end position="662"/>
    </location>
</feature>
<feature type="strand" evidence="15">
    <location>
        <begin position="668"/>
        <end position="676"/>
    </location>
</feature>
<feature type="turn" evidence="15">
    <location>
        <begin position="677"/>
        <end position="679"/>
    </location>
</feature>
<feature type="strand" evidence="15">
    <location>
        <begin position="680"/>
        <end position="685"/>
    </location>
</feature>
<feature type="strand" evidence="15">
    <location>
        <begin position="696"/>
        <end position="706"/>
    </location>
</feature>
<feature type="lipid moiety-binding region" description="N-myristoyl glycine" evidence="1">
    <location sequence="Q80Y83-4">
        <position position="2"/>
    </location>
</feature>
<feature type="modified residue" description="Phosphoserine" evidence="14">
    <location sequence="Q80Y83-11">
        <position position="13"/>
    </location>
</feature>
<feature type="modified residue" description="Phosphoserine" evidence="14">
    <location sequence="Q80Y83-12">
        <position position="13"/>
    </location>
</feature>
<proteinExistence type="evidence at protein level"/>
<comment type="function">
    <text evidence="7 8">Positive effector of the Wnt signaling pathway; activates WNT3A signaling via DVL2. Regulates JNK activation by AXIN1 and DVL2.</text>
</comment>
<comment type="subunit">
    <text evidence="2 7">May bind filamentous actin. Directly interacts (via DIX domain) with DVL2 (via DIX domain). Interacts with gamma-tubulin (By similarity). Interacts with the complex composed of DVL2 and Rac. Interacts with AXIN1; competes with MAP3K1. Interacts with MAP3K4 preventing MAP3K4 interaction with AXIN1.</text>
</comment>
<comment type="subcellular location">
    <subcellularLocation>
        <location evidence="2">Cell junction</location>
        <location evidence="2">Focal adhesion</location>
    </subcellularLocation>
    <subcellularLocation>
        <location evidence="2">Cytoplasm</location>
        <location evidence="2">Cytoskeleton</location>
        <location evidence="2">Stress fiber</location>
    </subcellularLocation>
    <subcellularLocation>
        <location evidence="2">Cytoplasm</location>
    </subcellularLocation>
    <text evidence="2">Colocalizes with gamma-tubulin at the centrosome, both during interphase and mitosis. Associated with actin stress fiber at the filament ends.</text>
</comment>
<comment type="alternative products">
    <event type="alternative splicing"/>
    <isoform>
        <id>Q80Y83-1</id>
        <name>1</name>
        <name>Abeta1L</name>
        <sequence type="displayed"/>
    </isoform>
    <isoform>
        <id>Q80Y83-2</id>
        <name>2</name>
        <name>Abeta1S</name>
        <sequence type="described" ref="VSP_025394"/>
    </isoform>
    <isoform>
        <id>Q80Y83-3</id>
        <name>3</name>
        <name>Aalpha1L</name>
        <sequence type="described" ref="VSP_025387"/>
    </isoform>
    <isoform>
        <id>Q80Y83-4</id>
        <name>4</name>
        <name>Aalpha1S</name>
        <sequence type="described" ref="VSP_025387 VSP_025394"/>
    </isoform>
    <isoform>
        <id>Q80Y83-5</id>
        <name>5</name>
        <name>Abeta2L</name>
        <sequence type="described" ref="VSP_025388"/>
    </isoform>
    <isoform>
        <id>Q80Y83-6</id>
        <name>6</name>
        <name>Abeta2S</name>
        <sequence type="described" ref="VSP_025388 VSP_025394"/>
    </isoform>
    <isoform>
        <id>Q80Y83-7</id>
        <name>7</name>
        <name>Aalpha2L</name>
        <sequence type="described" ref="VSP_025387 VSP_025388"/>
    </isoform>
    <isoform>
        <id>Q80Y83-8</id>
        <name>8</name>
        <name>Aalpha2S</name>
        <sequence type="described" ref="VSP_025387 VSP_025388 VSP_025394"/>
    </isoform>
    <isoform>
        <id>Q80Y83-9</id>
        <name>9</name>
        <name>BbetaL</name>
        <sequence type="described" ref="VSP_025386 VSP_025391"/>
    </isoform>
    <isoform>
        <id>Q80Y83-10</id>
        <name>10</name>
        <name>BbetaS</name>
        <sequence type="described" ref="VSP_025386 VSP_025391 VSP_025394"/>
    </isoform>
    <isoform>
        <id>Q80Y83-11</id>
        <name>11</name>
        <name>BalphaL</name>
        <sequence type="described" ref="VSP_025385 VSP_025392"/>
    </isoform>
    <isoform>
        <id>Q80Y83-12</id>
        <name>12</name>
        <name>BalphaS</name>
        <sequence type="described" ref="VSP_025385 VSP_025392 VSP_025394"/>
    </isoform>
    <isoform>
        <id>Q80Y83-13</id>
        <name>13</name>
        <name>CL</name>
        <sequence type="described" ref="VSP_025383"/>
    </isoform>
    <isoform>
        <id>Q80Y83-14</id>
        <name>14</name>
        <name>CS</name>
        <sequence type="described" ref="VSP_025383 VSP_025394"/>
    </isoform>
    <isoform>
        <id>Q80Y83-15</id>
        <name>15</name>
        <sequence type="described" ref="VSP_025384 VSP_025393 VSP_025395 VSP_025396"/>
    </isoform>
    <isoform>
        <id>Q80Y83-16</id>
        <name>16</name>
        <sequence type="described" ref="VSP_025387 VSP_025389 VSP_025390"/>
    </isoform>
</comment>
<comment type="tissue specificity">
    <text evidence="8">Abundantly expressed in brain and testis and to a lower extent in lung, kidney, colon, ovary and urinary bladder. Expressed in brain, liver, testis and spleen (at protein level). Expressed throughout the brain with strong expression in main and accessory olfactory bulbs, cerebral cortex, piriform cortex, hippocampus, habenular nucleus, dorsal thalamus, superior and inferior colliculi and cerebellum.</text>
</comment>
<comment type="developmental stage">
    <text evidence="8 9">Expressed in embryonic brain, liver and spleen (at protein level). First detected at 7.5 dpc in the node. Expressed in the cephalic mesenchyme and tail bud at 8.5 dpc, and in the branchial arch and forelimb bud at 9.5 dpc. In the central nervous system, expression begins and persists in the regions where the neurons differentiate. Expression is also strong in the peripheral nervous system, including sensory cranial ganglia, dorsal root ganglia, and autonomic ganglia, and in the sensory organs, such as the inner nuclear layer of the neural retina, saccule and cochlea of the inner ear, and nasal epithelium. Outside the nervous system, expression is detected in the cartilage, tongue, lung bud, stomach, and gonad from 12.5 dpc to 14.5 dpc, and in the tooth bud, bronchial epithelium, and kidney at 17.5 dpc.</text>
</comment>
<comment type="domain">
    <text evidence="2">The coiled-coil domain mediates interaction with MAP3K4 and inhibition of AXIN1-mediated JNK activation through MAP3K4.</text>
</comment>
<comment type="domain">
    <text evidence="2">The DIX domain mediates interaction with AXIN1 and inhibition of AXIN1-mediated JNK activation through MAP3K1. Mediates interaction with DVL2; this interaction is required for activation of Wnt signaling (By similarity).</text>
</comment>
<comment type="PTM">
    <text evidence="2">Phosphorylated on tyrosine and serine residues.</text>
</comment>
<comment type="PTM">
    <text evidence="2">Polyubiquitinated, leading to its proteasomal degradation. WNT3A signaling increases DIXDC1 protein levels by inhibiting its ubiquitination and subsequent degradation.</text>
</comment>
<comment type="miscellaneous">
    <molecule>Isoform 5</molecule>
    <text evidence="13">Major isoform.</text>
</comment>
<comment type="miscellaneous">
    <molecule>Isoform 7</molecule>
    <text evidence="13">Major isoform.</text>
</comment>
<comment type="miscellaneous">
    <molecule>Isoform 11</molecule>
    <text evidence="13">Major isoform.</text>
</comment>
<comment type="similarity">
    <text evidence="13">Belongs to the DIXDC1 family.</text>
</comment>
<sequence length="711" mass="80215">MLACLTRGNLLDVLQEGFNEQQLQAYVAWVNAQLKKRPSVKPVQDLRQDLRDGVILAYLIEIVGQLALDSDASVDERTDFFLLHSPFKAAGEKLTGVQLSPSNQQEMKSNVERVLQFVASKKIRMHQTSAKDIVEGNLKSIMRLVLALAAHFKPGSSRTVSQGRDSKAPVQSHQPHCATAVAQGAAAALADVCHDVSRSGRDVFRYRQRNASVDGEIENPYWSVRALVQQYEGQQKSPSESSCSSLTSPSPIHSAKSESIITQAEEKADFVIIPSEGIENRTDEPDSPSSRDWRPGSRGTYLEATWEEQLLEQQEHLEKEMEEAKKMISGLQALLLNGSLPEDEQERPVALCEPGVNPEEQLIIIRSRLDQSVEENQDLKKELLKCKQEARNLQGIKDALQQRLTQQDTSVLQLKQELLRANMDKDELHNQNVDLQRKLEERNRLLGEYKKELGQKDRLFQQQQAKLEEALRKLSDASYQQVDLERELEQKDVLLAHCMKGETDEVTNYNSHSSQRNGFVLPVAGRGATTVTHRGPQTSDLQLVRDALRSLRNSFSGHDPQHHTIDSLEQGISSLMERLHVVETQKKQERKVGGRSPRNQASSEYRASWPPNSTLPHSQSSPAVSSTCTKVLYFTDRSLTPFMVNIPKRLGEVTLKDFKAAIDREGNHRYHFKALDPEFGTVKEEVFHDDDAIPGWEGKIVAWVEEDHREN</sequence>
<keyword id="KW-0002">3D-structure</keyword>
<keyword id="KW-0009">Actin-binding</keyword>
<keyword id="KW-0025">Alternative splicing</keyword>
<keyword id="KW-0965">Cell junction</keyword>
<keyword id="KW-0175">Coiled coil</keyword>
<keyword id="KW-0963">Cytoplasm</keyword>
<keyword id="KW-0206">Cytoskeleton</keyword>
<keyword id="KW-0217">Developmental protein</keyword>
<keyword id="KW-0597">Phosphoprotein</keyword>
<keyword id="KW-1185">Reference proteome</keyword>
<keyword id="KW-0832">Ubl conjugation</keyword>
<keyword id="KW-0879">Wnt signaling pathway</keyword>
<dbReference type="EMBL" id="AY549883">
    <property type="protein sequence ID" value="AAT41660.1"/>
    <property type="molecule type" value="mRNA"/>
</dbReference>
<dbReference type="EMBL" id="AY549884">
    <property type="protein sequence ID" value="AAT41661.1"/>
    <property type="molecule type" value="mRNA"/>
</dbReference>
<dbReference type="EMBL" id="AY549885">
    <property type="protein sequence ID" value="AAT41662.1"/>
    <property type="molecule type" value="mRNA"/>
</dbReference>
<dbReference type="EMBL" id="AY549886">
    <property type="protein sequence ID" value="AAT41663.1"/>
    <property type="molecule type" value="mRNA"/>
</dbReference>
<dbReference type="EMBL" id="AY549887">
    <property type="protein sequence ID" value="AAT41664.1"/>
    <property type="molecule type" value="mRNA"/>
</dbReference>
<dbReference type="EMBL" id="AK082960">
    <property type="protein sequence ID" value="BAC38711.1"/>
    <property type="molecule type" value="mRNA"/>
</dbReference>
<dbReference type="EMBL" id="AK142668">
    <property type="protein sequence ID" value="BAE25153.1"/>
    <property type="molecule type" value="mRNA"/>
</dbReference>
<dbReference type="EMBL" id="AK164424">
    <property type="protein sequence ID" value="BAE37782.1"/>
    <property type="molecule type" value="mRNA"/>
</dbReference>
<dbReference type="EMBL" id="BC024834">
    <property type="protein sequence ID" value="AAH24834.1"/>
    <property type="molecule type" value="mRNA"/>
</dbReference>
<dbReference type="EMBL" id="BC048182">
    <property type="protein sequence ID" value="AAH48182.1"/>
    <property type="molecule type" value="mRNA"/>
</dbReference>
<dbReference type="EMBL" id="BC063085">
    <property type="protein sequence ID" value="AAH63085.1"/>
    <property type="molecule type" value="mRNA"/>
</dbReference>
<dbReference type="EMBL" id="AK129432">
    <property type="protein sequence ID" value="BAC98242.1"/>
    <property type="molecule type" value="mRNA"/>
</dbReference>
<dbReference type="CCDS" id="CCDS23169.1">
    <molecule id="Q80Y83-1"/>
</dbReference>
<dbReference type="CCDS" id="CCDS80995.1">
    <molecule id="Q80Y83-3"/>
</dbReference>
<dbReference type="CCDS" id="CCDS90563.1">
    <molecule id="Q80Y83-5"/>
</dbReference>
<dbReference type="RefSeq" id="NP_001297998.1">
    <molecule id="Q80Y83-3"/>
    <property type="nucleotide sequence ID" value="NM_001311069.1"/>
</dbReference>
<dbReference type="RefSeq" id="NP_001361585.1">
    <molecule id="Q80Y83-5"/>
    <property type="nucleotide sequence ID" value="NM_001374656.1"/>
</dbReference>
<dbReference type="RefSeq" id="NP_835219.1">
    <molecule id="Q80Y83-1"/>
    <property type="nucleotide sequence ID" value="NM_178118.2"/>
</dbReference>
<dbReference type="RefSeq" id="XP_006510517.1">
    <property type="nucleotide sequence ID" value="XM_006510454.3"/>
</dbReference>
<dbReference type="RefSeq" id="XP_006510518.1">
    <molecule id="Q80Y83-2"/>
    <property type="nucleotide sequence ID" value="XM_006510455.4"/>
</dbReference>
<dbReference type="RefSeq" id="XP_006510519.1">
    <molecule id="Q80Y83-11"/>
    <property type="nucleotide sequence ID" value="XM_006510456.5"/>
</dbReference>
<dbReference type="RefSeq" id="XP_006510520.1">
    <molecule id="Q80Y83-13"/>
    <property type="nucleotide sequence ID" value="XM_006510457.5"/>
</dbReference>
<dbReference type="RefSeq" id="XP_017168928.1">
    <molecule id="Q80Y83-3"/>
    <property type="nucleotide sequence ID" value="XM_017313439.3"/>
</dbReference>
<dbReference type="RefSeq" id="XP_017168929.1">
    <molecule id="Q80Y83-3"/>
    <property type="nucleotide sequence ID" value="XM_017313440.3"/>
</dbReference>
<dbReference type="RefSeq" id="XP_017168930.1">
    <molecule id="Q80Y83-12"/>
    <property type="nucleotide sequence ID" value="XM_017313441.3"/>
</dbReference>
<dbReference type="RefSeq" id="XP_030100287.1">
    <molecule id="Q80Y83-6"/>
    <property type="nucleotide sequence ID" value="XM_030244427.1"/>
</dbReference>
<dbReference type="RefSeq" id="XP_036010976.1">
    <molecule id="Q80Y83-13"/>
    <property type="nucleotide sequence ID" value="XM_036155083.1"/>
</dbReference>
<dbReference type="PDB" id="5Y3B">
    <property type="method" value="X-ray"/>
    <property type="resolution" value="3.00 A"/>
    <property type="chains" value="A/B/C/D/E/F/G=625-707"/>
</dbReference>
<dbReference type="PDBsum" id="5Y3B"/>
<dbReference type="SMR" id="Q80Y83"/>
<dbReference type="BioGRID" id="237048">
    <property type="interactions" value="2"/>
</dbReference>
<dbReference type="CORUM" id="Q80Y83"/>
<dbReference type="FunCoup" id="Q80Y83">
    <property type="interactions" value="767"/>
</dbReference>
<dbReference type="IntAct" id="Q80Y83">
    <property type="interactions" value="1"/>
</dbReference>
<dbReference type="STRING" id="10090.ENSMUSP00000034566"/>
<dbReference type="iPTMnet" id="Q80Y83"/>
<dbReference type="PhosphoSitePlus" id="Q80Y83"/>
<dbReference type="PaxDb" id="10090-ENSMUSP00000034566"/>
<dbReference type="PeptideAtlas" id="Q80Y83"/>
<dbReference type="ProteomicsDB" id="279697">
    <molecule id="Q80Y83-1"/>
</dbReference>
<dbReference type="ProteomicsDB" id="279698">
    <molecule id="Q80Y83-2"/>
</dbReference>
<dbReference type="ProteomicsDB" id="279699">
    <molecule id="Q80Y83-3"/>
</dbReference>
<dbReference type="ProteomicsDB" id="279700">
    <molecule id="Q80Y83-4"/>
</dbReference>
<dbReference type="ProteomicsDB" id="279701">
    <molecule id="Q80Y83-5"/>
</dbReference>
<dbReference type="ProteomicsDB" id="279702">
    <molecule id="Q80Y83-6"/>
</dbReference>
<dbReference type="ProteomicsDB" id="279703">
    <molecule id="Q80Y83-7"/>
</dbReference>
<dbReference type="ProteomicsDB" id="279704">
    <molecule id="Q80Y83-8"/>
</dbReference>
<dbReference type="ProteomicsDB" id="279705">
    <molecule id="Q80Y83-9"/>
</dbReference>
<dbReference type="ProteomicsDB" id="279706">
    <molecule id="Q80Y83-10"/>
</dbReference>
<dbReference type="ProteomicsDB" id="279707">
    <molecule id="Q80Y83-11"/>
</dbReference>
<dbReference type="ProteomicsDB" id="279708">
    <molecule id="Q80Y83-12"/>
</dbReference>
<dbReference type="ProteomicsDB" id="279709">
    <molecule id="Q80Y83-13"/>
</dbReference>
<dbReference type="ProteomicsDB" id="279710">
    <molecule id="Q80Y83-14"/>
</dbReference>
<dbReference type="ProteomicsDB" id="279711">
    <molecule id="Q80Y83-15"/>
</dbReference>
<dbReference type="Antibodypedia" id="32094">
    <property type="antibodies" value="212 antibodies from 30 providers"/>
</dbReference>
<dbReference type="DNASU" id="330938"/>
<dbReference type="Ensembl" id="ENSMUST00000034566.15">
    <molecule id="Q80Y83-1"/>
    <property type="protein sequence ID" value="ENSMUSP00000034566.9"/>
    <property type="gene ID" value="ENSMUSG00000032064.18"/>
</dbReference>
<dbReference type="Ensembl" id="ENSMUST00000117093.2">
    <molecule id="Q80Y83-16"/>
    <property type="protein sequence ID" value="ENSMUSP00000112654.2"/>
    <property type="gene ID" value="ENSMUSG00000032064.18"/>
</dbReference>
<dbReference type="Ensembl" id="ENSMUST00000117646.8">
    <molecule id="Q80Y83-5"/>
    <property type="protein sequence ID" value="ENSMUSP00000112431.2"/>
    <property type="gene ID" value="ENSMUSG00000032064.18"/>
</dbReference>
<dbReference type="Ensembl" id="ENSMUST00000120622.2">
    <molecule id="Q80Y83-15"/>
    <property type="protein sequence ID" value="ENSMUSP00000113934.2"/>
    <property type="gene ID" value="ENSMUSG00000032064.18"/>
</dbReference>
<dbReference type="Ensembl" id="ENSMUST00000121634.8">
    <molecule id="Q80Y83-3"/>
    <property type="protein sequence ID" value="ENSMUSP00000113089.2"/>
    <property type="gene ID" value="ENSMUSG00000032064.18"/>
</dbReference>
<dbReference type="GeneID" id="330938"/>
<dbReference type="KEGG" id="mmu:330938"/>
<dbReference type="UCSC" id="uc009pkb.1">
    <molecule id="Q80Y83-11"/>
    <property type="organism name" value="mouse"/>
</dbReference>
<dbReference type="UCSC" id="uc009pkc.2">
    <molecule id="Q80Y83-1"/>
    <property type="organism name" value="mouse"/>
</dbReference>
<dbReference type="UCSC" id="uc009pkd.1">
    <molecule id="Q80Y83-3"/>
    <property type="organism name" value="mouse"/>
</dbReference>
<dbReference type="UCSC" id="uc009pke.1">
    <molecule id="Q80Y83-15"/>
    <property type="organism name" value="mouse"/>
</dbReference>
<dbReference type="UCSC" id="uc009pkh.1">
    <molecule id="Q80Y83-16"/>
    <property type="organism name" value="mouse"/>
</dbReference>
<dbReference type="AGR" id="MGI:2679721"/>
<dbReference type="CTD" id="85458"/>
<dbReference type="MGI" id="MGI:2679721">
    <property type="gene designation" value="Dixdc1"/>
</dbReference>
<dbReference type="VEuPathDB" id="HostDB:ENSMUSG00000032064"/>
<dbReference type="eggNOG" id="ENOG502RD5G">
    <property type="taxonomic scope" value="Eukaryota"/>
</dbReference>
<dbReference type="GeneTree" id="ENSGT00950000182903"/>
<dbReference type="HOGENOM" id="CLU_025678_0_0_1"/>
<dbReference type="InParanoid" id="Q80Y83"/>
<dbReference type="OMA" id="ISWVNSQ"/>
<dbReference type="OrthoDB" id="30551at2759"/>
<dbReference type="PhylomeDB" id="Q80Y83"/>
<dbReference type="TreeFam" id="TF318198"/>
<dbReference type="BioGRID-ORCS" id="330938">
    <property type="hits" value="0 hits in 60 CRISPR screens"/>
</dbReference>
<dbReference type="PRO" id="PR:Q80Y83"/>
<dbReference type="Proteomes" id="UP000000589">
    <property type="component" value="Chromosome 9"/>
</dbReference>
<dbReference type="RNAct" id="Q80Y83">
    <property type="molecule type" value="protein"/>
</dbReference>
<dbReference type="Bgee" id="ENSMUSG00000032064">
    <property type="expression patterns" value="Expressed in cerebellum lobe and 270 other cell types or tissues"/>
</dbReference>
<dbReference type="ExpressionAtlas" id="Q80Y83">
    <property type="expression patterns" value="baseline and differential"/>
</dbReference>
<dbReference type="GO" id="GO:0005829">
    <property type="term" value="C:cytosol"/>
    <property type="evidence" value="ECO:0000314"/>
    <property type="project" value="MGI"/>
</dbReference>
<dbReference type="GO" id="GO:0005925">
    <property type="term" value="C:focal adhesion"/>
    <property type="evidence" value="ECO:0007669"/>
    <property type="project" value="UniProtKB-SubCell"/>
</dbReference>
<dbReference type="GO" id="GO:0098978">
    <property type="term" value="C:glutamatergic synapse"/>
    <property type="evidence" value="ECO:0000314"/>
    <property type="project" value="SynGO"/>
</dbReference>
<dbReference type="GO" id="GO:0098794">
    <property type="term" value="C:postsynapse"/>
    <property type="evidence" value="ECO:0000314"/>
    <property type="project" value="SynGO"/>
</dbReference>
<dbReference type="GO" id="GO:0001725">
    <property type="term" value="C:stress fiber"/>
    <property type="evidence" value="ECO:0007669"/>
    <property type="project" value="UniProtKB-SubCell"/>
</dbReference>
<dbReference type="GO" id="GO:0003779">
    <property type="term" value="F:actin binding"/>
    <property type="evidence" value="ECO:0007669"/>
    <property type="project" value="UniProtKB-KW"/>
</dbReference>
<dbReference type="GO" id="GO:0043015">
    <property type="term" value="F:gamma-tubulin binding"/>
    <property type="evidence" value="ECO:0000250"/>
    <property type="project" value="UniProtKB"/>
</dbReference>
<dbReference type="GO" id="GO:0019904">
    <property type="term" value="F:protein domain specific binding"/>
    <property type="evidence" value="ECO:0000353"/>
    <property type="project" value="MGI"/>
</dbReference>
<dbReference type="GO" id="GO:0060070">
    <property type="term" value="P:canonical Wnt signaling pathway"/>
    <property type="evidence" value="ECO:0000315"/>
    <property type="project" value="DFLAT"/>
</dbReference>
<dbReference type="GO" id="GO:0021846">
    <property type="term" value="P:cell proliferation in forebrain"/>
    <property type="evidence" value="ECO:0000315"/>
    <property type="project" value="DFLAT"/>
</dbReference>
<dbReference type="GO" id="GO:0021795">
    <property type="term" value="P:cerebral cortex cell migration"/>
    <property type="evidence" value="ECO:0000315"/>
    <property type="project" value="DFLAT"/>
</dbReference>
<dbReference type="GO" id="GO:0021799">
    <property type="term" value="P:cerebral cortex radially oriented cell migration"/>
    <property type="evidence" value="ECO:0000315"/>
    <property type="project" value="DFLAT"/>
</dbReference>
<dbReference type="GO" id="GO:0021869">
    <property type="term" value="P:forebrain ventricular zone progenitor cell division"/>
    <property type="evidence" value="ECO:0000315"/>
    <property type="project" value="DFLAT"/>
</dbReference>
<dbReference type="GO" id="GO:0098885">
    <property type="term" value="P:modification of postsynaptic actin cytoskeleton"/>
    <property type="evidence" value="ECO:0000314"/>
    <property type="project" value="SynGO"/>
</dbReference>
<dbReference type="GO" id="GO:0045665">
    <property type="term" value="P:negative regulation of neuron differentiation"/>
    <property type="evidence" value="ECO:0000315"/>
    <property type="project" value="DFLAT"/>
</dbReference>
<dbReference type="GO" id="GO:0030177">
    <property type="term" value="P:positive regulation of Wnt signaling pathway"/>
    <property type="evidence" value="ECO:0000315"/>
    <property type="project" value="DFLAT"/>
</dbReference>
<dbReference type="GO" id="GO:0032956">
    <property type="term" value="P:regulation of actin cytoskeleton organization"/>
    <property type="evidence" value="ECO:0000315"/>
    <property type="project" value="DFLAT"/>
</dbReference>
<dbReference type="GO" id="GO:0070507">
    <property type="term" value="P:regulation of microtubule cytoskeleton organization"/>
    <property type="evidence" value="ECO:0000315"/>
    <property type="project" value="DFLAT"/>
</dbReference>
<dbReference type="CDD" id="cd21213">
    <property type="entry name" value="CH_DIXDC1"/>
    <property type="match status" value="1"/>
</dbReference>
<dbReference type="FunFam" id="1.10.418.10:FF:000054">
    <property type="entry name" value="Dixin isoform 1"/>
    <property type="match status" value="1"/>
</dbReference>
<dbReference type="FunFam" id="2.40.240.130:FF:000003">
    <property type="entry name" value="Dixin isoform 1"/>
    <property type="match status" value="1"/>
</dbReference>
<dbReference type="Gene3D" id="2.40.240.130">
    <property type="match status" value="1"/>
</dbReference>
<dbReference type="Gene3D" id="1.10.418.10">
    <property type="entry name" value="Calponin-like domain"/>
    <property type="match status" value="1"/>
</dbReference>
<dbReference type="InterPro" id="IPR001715">
    <property type="entry name" value="CH_dom"/>
</dbReference>
<dbReference type="InterPro" id="IPR036872">
    <property type="entry name" value="CH_dom_sf"/>
</dbReference>
<dbReference type="InterPro" id="IPR001158">
    <property type="entry name" value="DIX"/>
</dbReference>
<dbReference type="InterPro" id="IPR038207">
    <property type="entry name" value="DIX_dom_sf"/>
</dbReference>
<dbReference type="InterPro" id="IPR015506">
    <property type="entry name" value="Dsh/Dvl-rel"/>
</dbReference>
<dbReference type="InterPro" id="IPR029071">
    <property type="entry name" value="Ubiquitin-like_domsf"/>
</dbReference>
<dbReference type="PANTHER" id="PTHR10878:SF22">
    <property type="entry name" value="DIXIN"/>
    <property type="match status" value="1"/>
</dbReference>
<dbReference type="PANTHER" id="PTHR10878">
    <property type="entry name" value="SEGMENT POLARITY PROTEIN DISHEVELLED"/>
    <property type="match status" value="1"/>
</dbReference>
<dbReference type="Pfam" id="PF00307">
    <property type="entry name" value="CH"/>
    <property type="match status" value="1"/>
</dbReference>
<dbReference type="Pfam" id="PF00778">
    <property type="entry name" value="DIX"/>
    <property type="match status" value="1"/>
</dbReference>
<dbReference type="SMART" id="SM00033">
    <property type="entry name" value="CH"/>
    <property type="match status" value="1"/>
</dbReference>
<dbReference type="SMART" id="SM00021">
    <property type="entry name" value="DAX"/>
    <property type="match status" value="1"/>
</dbReference>
<dbReference type="SUPFAM" id="SSF47576">
    <property type="entry name" value="Calponin-homology domain, CH-domain"/>
    <property type="match status" value="1"/>
</dbReference>
<dbReference type="SUPFAM" id="SSF54236">
    <property type="entry name" value="Ubiquitin-like"/>
    <property type="match status" value="1"/>
</dbReference>
<dbReference type="PROSITE" id="PS50021">
    <property type="entry name" value="CH"/>
    <property type="match status" value="1"/>
</dbReference>
<dbReference type="PROSITE" id="PS50841">
    <property type="entry name" value="DIX"/>
    <property type="match status" value="1"/>
</dbReference>
<reference key="1">
    <citation type="journal article" date="2005" name="Brain Res. Mol. Brain Res.">
        <title>Identification and differential expression of multiple isoforms of mouse coiled-coil-DIX1 (Ccd1), a positive regulator of Wnt signaling.</title>
        <authorList>
            <person name="Shiomi K."/>
            <person name="Kanemoto M."/>
            <person name="Keino-Masu K."/>
            <person name="Yoshida S."/>
            <person name="Soma K."/>
            <person name="Masu M."/>
        </authorList>
    </citation>
    <scope>NUCLEOTIDE SEQUENCE [MRNA] (ISOFORMS 1; 3; 9; 11 AND 13)</scope>
    <scope>ALTERNATIVE SPLICING (ISOFORMS 2; 4; 5; 6; 7; 8; 10; 12 AND 14)</scope>
    <scope>FUNCTION</scope>
    <scope>TISSUE SPECIFICITY</scope>
    <scope>DEVELOPMENTAL STAGE</scope>
    <source>
        <strain>C57BL/6J</strain>
        <tissue>Brain</tissue>
    </source>
</reference>
<reference key="2">
    <citation type="journal article" date="2005" name="Science">
        <title>The transcriptional landscape of the mammalian genome.</title>
        <authorList>
            <person name="Carninci P."/>
            <person name="Kasukawa T."/>
            <person name="Katayama S."/>
            <person name="Gough J."/>
            <person name="Frith M.C."/>
            <person name="Maeda N."/>
            <person name="Oyama R."/>
            <person name="Ravasi T."/>
            <person name="Lenhard B."/>
            <person name="Wells C."/>
            <person name="Kodzius R."/>
            <person name="Shimokawa K."/>
            <person name="Bajic V.B."/>
            <person name="Brenner S.E."/>
            <person name="Batalov S."/>
            <person name="Forrest A.R."/>
            <person name="Zavolan M."/>
            <person name="Davis M.J."/>
            <person name="Wilming L.G."/>
            <person name="Aidinis V."/>
            <person name="Allen J.E."/>
            <person name="Ambesi-Impiombato A."/>
            <person name="Apweiler R."/>
            <person name="Aturaliya R.N."/>
            <person name="Bailey T.L."/>
            <person name="Bansal M."/>
            <person name="Baxter L."/>
            <person name="Beisel K.W."/>
            <person name="Bersano T."/>
            <person name="Bono H."/>
            <person name="Chalk A.M."/>
            <person name="Chiu K.P."/>
            <person name="Choudhary V."/>
            <person name="Christoffels A."/>
            <person name="Clutterbuck D.R."/>
            <person name="Crowe M.L."/>
            <person name="Dalla E."/>
            <person name="Dalrymple B.P."/>
            <person name="de Bono B."/>
            <person name="Della Gatta G."/>
            <person name="di Bernardo D."/>
            <person name="Down T."/>
            <person name="Engstrom P."/>
            <person name="Fagiolini M."/>
            <person name="Faulkner G."/>
            <person name="Fletcher C.F."/>
            <person name="Fukushima T."/>
            <person name="Furuno M."/>
            <person name="Futaki S."/>
            <person name="Gariboldi M."/>
            <person name="Georgii-Hemming P."/>
            <person name="Gingeras T.R."/>
            <person name="Gojobori T."/>
            <person name="Green R.E."/>
            <person name="Gustincich S."/>
            <person name="Harbers M."/>
            <person name="Hayashi Y."/>
            <person name="Hensch T.K."/>
            <person name="Hirokawa N."/>
            <person name="Hill D."/>
            <person name="Huminiecki L."/>
            <person name="Iacono M."/>
            <person name="Ikeo K."/>
            <person name="Iwama A."/>
            <person name="Ishikawa T."/>
            <person name="Jakt M."/>
            <person name="Kanapin A."/>
            <person name="Katoh M."/>
            <person name="Kawasawa Y."/>
            <person name="Kelso J."/>
            <person name="Kitamura H."/>
            <person name="Kitano H."/>
            <person name="Kollias G."/>
            <person name="Krishnan S.P."/>
            <person name="Kruger A."/>
            <person name="Kummerfeld S.K."/>
            <person name="Kurochkin I.V."/>
            <person name="Lareau L.F."/>
            <person name="Lazarevic D."/>
            <person name="Lipovich L."/>
            <person name="Liu J."/>
            <person name="Liuni S."/>
            <person name="McWilliam S."/>
            <person name="Madan Babu M."/>
            <person name="Madera M."/>
            <person name="Marchionni L."/>
            <person name="Matsuda H."/>
            <person name="Matsuzawa S."/>
            <person name="Miki H."/>
            <person name="Mignone F."/>
            <person name="Miyake S."/>
            <person name="Morris K."/>
            <person name="Mottagui-Tabar S."/>
            <person name="Mulder N."/>
            <person name="Nakano N."/>
            <person name="Nakauchi H."/>
            <person name="Ng P."/>
            <person name="Nilsson R."/>
            <person name="Nishiguchi S."/>
            <person name="Nishikawa S."/>
            <person name="Nori F."/>
            <person name="Ohara O."/>
            <person name="Okazaki Y."/>
            <person name="Orlando V."/>
            <person name="Pang K.C."/>
            <person name="Pavan W.J."/>
            <person name="Pavesi G."/>
            <person name="Pesole G."/>
            <person name="Petrovsky N."/>
            <person name="Piazza S."/>
            <person name="Reed J."/>
            <person name="Reid J.F."/>
            <person name="Ring B.Z."/>
            <person name="Ringwald M."/>
            <person name="Rost B."/>
            <person name="Ruan Y."/>
            <person name="Salzberg S.L."/>
            <person name="Sandelin A."/>
            <person name="Schneider C."/>
            <person name="Schoenbach C."/>
            <person name="Sekiguchi K."/>
            <person name="Semple C.A."/>
            <person name="Seno S."/>
            <person name="Sessa L."/>
            <person name="Sheng Y."/>
            <person name="Shibata Y."/>
            <person name="Shimada H."/>
            <person name="Shimada K."/>
            <person name="Silva D."/>
            <person name="Sinclair B."/>
            <person name="Sperling S."/>
            <person name="Stupka E."/>
            <person name="Sugiura K."/>
            <person name="Sultana R."/>
            <person name="Takenaka Y."/>
            <person name="Taki K."/>
            <person name="Tammoja K."/>
            <person name="Tan S.L."/>
            <person name="Tang S."/>
            <person name="Taylor M.S."/>
            <person name="Tegner J."/>
            <person name="Teichmann S.A."/>
            <person name="Ueda H.R."/>
            <person name="van Nimwegen E."/>
            <person name="Verardo R."/>
            <person name="Wei C.L."/>
            <person name="Yagi K."/>
            <person name="Yamanishi H."/>
            <person name="Zabarovsky E."/>
            <person name="Zhu S."/>
            <person name="Zimmer A."/>
            <person name="Hide W."/>
            <person name="Bult C."/>
            <person name="Grimmond S.M."/>
            <person name="Teasdale R.D."/>
            <person name="Liu E.T."/>
            <person name="Brusic V."/>
            <person name="Quackenbush J."/>
            <person name="Wahlestedt C."/>
            <person name="Mattick J.S."/>
            <person name="Hume D.A."/>
            <person name="Kai C."/>
            <person name="Sasaki D."/>
            <person name="Tomaru Y."/>
            <person name="Fukuda S."/>
            <person name="Kanamori-Katayama M."/>
            <person name="Suzuki M."/>
            <person name="Aoki J."/>
            <person name="Arakawa T."/>
            <person name="Iida J."/>
            <person name="Imamura K."/>
            <person name="Itoh M."/>
            <person name="Kato T."/>
            <person name="Kawaji H."/>
            <person name="Kawagashira N."/>
            <person name="Kawashima T."/>
            <person name="Kojima M."/>
            <person name="Kondo S."/>
            <person name="Konno H."/>
            <person name="Nakano K."/>
            <person name="Ninomiya N."/>
            <person name="Nishio T."/>
            <person name="Okada M."/>
            <person name="Plessy C."/>
            <person name="Shibata K."/>
            <person name="Shiraki T."/>
            <person name="Suzuki S."/>
            <person name="Tagami M."/>
            <person name="Waki K."/>
            <person name="Watahiki A."/>
            <person name="Okamura-Oho Y."/>
            <person name="Suzuki H."/>
            <person name="Kawai J."/>
            <person name="Hayashizaki Y."/>
        </authorList>
    </citation>
    <scope>NUCLEOTIDE SEQUENCE [LARGE SCALE MRNA] (ISOFORM 15)</scope>
    <scope>NUCLEOTIDE SEQUENCE [LARGE SCALE MRNA] OF 1-316 (ISOFORM 5)</scope>
    <scope>NUCLEOTIDE SEQUENCE [LARGE SCALE MRNA] OF 612-711 (ISOFORMS 1/2/3/4/5)</scope>
    <source>
        <strain>C57BL/6J</strain>
        <tissue>Embryonic eye</tissue>
        <tissue>Embryonic spinal cord</tissue>
        <tissue>Mammary gland</tissue>
    </source>
</reference>
<reference key="3">
    <citation type="journal article" date="2004" name="Genome Res.">
        <title>The status, quality, and expansion of the NIH full-length cDNA project: the Mammalian Gene Collection (MGC).</title>
        <authorList>
            <consortium name="The MGC Project Team"/>
        </authorList>
    </citation>
    <scope>NUCLEOTIDE SEQUENCE [LARGE SCALE MRNA] (ISOFORMS 1 AND 16)</scope>
    <source>
        <strain>C57BL/6J</strain>
        <tissue>Embryonic brain</tissue>
        <tissue>Eye</tissue>
    </source>
</reference>
<reference key="4">
    <citation type="journal article" date="2003" name="DNA Res.">
        <title>Prediction of the coding sequences of mouse homologues of KIAA gene: III. The complete nucleotide sequences of 500 mouse KIAA-homologous cDNAs identified by screening of terminal sequences of cDNA clones randomly sampled from size-fractionated libraries.</title>
        <authorList>
            <person name="Okazaki N."/>
            <person name="Kikuno R."/>
            <person name="Ohara R."/>
            <person name="Inamoto S."/>
            <person name="Koseki H."/>
            <person name="Hiraoka S."/>
            <person name="Saga Y."/>
            <person name="Nagase T."/>
            <person name="Ohara O."/>
            <person name="Koga H."/>
        </authorList>
    </citation>
    <scope>NUCLEOTIDE SEQUENCE [LARGE SCALE MRNA] OF 228-711 (ISOFORMS 1/2)</scope>
    <source>
        <tissue>Embryonic tail</tissue>
    </source>
</reference>
<reference key="5">
    <citation type="journal article" date="2004" name="J. Biol. Chem.">
        <title>The DIX domain protein coiled-coil-DIX1 inhibits c-Jun N-terminal kinase activation by Axin and dishevelled through distinct mechanisms.</title>
        <authorList>
            <person name="Wong C.K."/>
            <person name="Luo W."/>
            <person name="Deng Y."/>
            <person name="Zou H."/>
            <person name="Ye Z."/>
            <person name="Lin S.-C."/>
        </authorList>
    </citation>
    <scope>FUNCTION</scope>
    <scope>INTERACTION WITH AXIN1; DVL2; MAP3K4 AND RAC</scope>
</reference>
<reference key="6">
    <citation type="journal article" date="2006" name="Gene Expr. Patterns">
        <title>Expression of mouse Coiled-coil-DIX1 (Ccd1), a positive regulator of Wnt signaling, during embryonic development.</title>
        <authorList>
            <person name="Soma K."/>
            <person name="Shiomi K."/>
            <person name="Keino-Masu K."/>
            <person name="Masu M."/>
        </authorList>
    </citation>
    <scope>DEVELOPMENTAL STAGE</scope>
</reference>
<reference key="7">
    <citation type="journal article" date="2010" name="Cell">
        <title>A tissue-specific atlas of mouse protein phosphorylation and expression.</title>
        <authorList>
            <person name="Huttlin E.L."/>
            <person name="Jedrychowski M.P."/>
            <person name="Elias J.E."/>
            <person name="Goswami T."/>
            <person name="Rad R."/>
            <person name="Beausoleil S.A."/>
            <person name="Villen J."/>
            <person name="Haas W."/>
            <person name="Sowa M.E."/>
            <person name="Gygi S.P."/>
        </authorList>
    </citation>
    <scope>PHOSPHORYLATION [LARGE SCALE ANALYSIS] AT SER-212 AND SER-257</scope>
    <scope>PHOSPHORYLATION [LARGE SCALE ANALYSIS] AT SER-13 (ISOFORMS 11 AND 12)</scope>
    <scope>IDENTIFICATION BY MASS SPECTROMETRY [LARGE SCALE ANALYSIS]</scope>
    <source>
        <tissue>Brain</tissue>
        <tissue>Kidney</tissue>
    </source>
</reference>
<evidence type="ECO:0000250" key="1"/>
<evidence type="ECO:0000250" key="2">
    <source>
        <dbReference type="UniProtKB" id="Q155Q3"/>
    </source>
</evidence>
<evidence type="ECO:0000255" key="3"/>
<evidence type="ECO:0000255" key="4">
    <source>
        <dbReference type="PROSITE-ProRule" id="PRU00044"/>
    </source>
</evidence>
<evidence type="ECO:0000255" key="5">
    <source>
        <dbReference type="PROSITE-ProRule" id="PRU00069"/>
    </source>
</evidence>
<evidence type="ECO:0000256" key="6">
    <source>
        <dbReference type="SAM" id="MobiDB-lite"/>
    </source>
</evidence>
<evidence type="ECO:0000269" key="7">
    <source>
    </source>
</evidence>
<evidence type="ECO:0000269" key="8">
    <source>
    </source>
</evidence>
<evidence type="ECO:0000269" key="9">
    <source>
    </source>
</evidence>
<evidence type="ECO:0000303" key="10">
    <source>
    </source>
</evidence>
<evidence type="ECO:0000303" key="11">
    <source>
    </source>
</evidence>
<evidence type="ECO:0000303" key="12">
    <source>
    </source>
</evidence>
<evidence type="ECO:0000305" key="13"/>
<evidence type="ECO:0007744" key="14">
    <source>
    </source>
</evidence>
<evidence type="ECO:0007829" key="15">
    <source>
        <dbReference type="PDB" id="5Y3B"/>
    </source>
</evidence>
<protein>
    <recommendedName>
        <fullName>Dixin</fullName>
    </recommendedName>
    <alternativeName>
        <fullName>Coiled-coil protein DIX1</fullName>
        <shortName>Coiled-coil-DIX1</shortName>
    </alternativeName>
    <alternativeName>
        <fullName>DIX domain-containing protein 1</fullName>
    </alternativeName>
</protein>